<accession>Q16AC6</accession>
<feature type="chain" id="PRO_0000273844" description="Large ribosomal subunit protein uL30">
    <location>
        <begin position="1"/>
        <end position="62"/>
    </location>
</feature>
<sequence length="62" mass="6919">MAKTIVIKQIGSPIRRPAKQRATLIGLGLNKMHKTRELEDTPSVRGMINSIPHMVEIVEEKG</sequence>
<evidence type="ECO:0000255" key="1">
    <source>
        <dbReference type="HAMAP-Rule" id="MF_01371"/>
    </source>
</evidence>
<evidence type="ECO:0000305" key="2"/>
<organism>
    <name type="scientific">Roseobacter denitrificans (strain ATCC 33942 / OCh 114)</name>
    <name type="common">Erythrobacter sp. (strain OCh 114)</name>
    <name type="synonym">Roseobacter denitrificans</name>
    <dbReference type="NCBI Taxonomy" id="375451"/>
    <lineage>
        <taxon>Bacteria</taxon>
        <taxon>Pseudomonadati</taxon>
        <taxon>Pseudomonadota</taxon>
        <taxon>Alphaproteobacteria</taxon>
        <taxon>Rhodobacterales</taxon>
        <taxon>Roseobacteraceae</taxon>
        <taxon>Roseobacter</taxon>
    </lineage>
</organism>
<dbReference type="EMBL" id="CP000362">
    <property type="protein sequence ID" value="ABG31067.1"/>
    <property type="molecule type" value="Genomic_DNA"/>
</dbReference>
<dbReference type="RefSeq" id="WP_011567687.1">
    <property type="nucleotide sequence ID" value="NZ_FOOO01000013.1"/>
</dbReference>
<dbReference type="SMR" id="Q16AC6"/>
<dbReference type="STRING" id="375451.RD1_1429"/>
<dbReference type="KEGG" id="rde:RD1_1429"/>
<dbReference type="eggNOG" id="COG1841">
    <property type="taxonomic scope" value="Bacteria"/>
</dbReference>
<dbReference type="HOGENOM" id="CLU_131047_1_2_5"/>
<dbReference type="OrthoDB" id="9812790at2"/>
<dbReference type="Proteomes" id="UP000007029">
    <property type="component" value="Chromosome"/>
</dbReference>
<dbReference type="GO" id="GO:0022625">
    <property type="term" value="C:cytosolic large ribosomal subunit"/>
    <property type="evidence" value="ECO:0007669"/>
    <property type="project" value="TreeGrafter"/>
</dbReference>
<dbReference type="GO" id="GO:0003735">
    <property type="term" value="F:structural constituent of ribosome"/>
    <property type="evidence" value="ECO:0007669"/>
    <property type="project" value="InterPro"/>
</dbReference>
<dbReference type="GO" id="GO:0006412">
    <property type="term" value="P:translation"/>
    <property type="evidence" value="ECO:0007669"/>
    <property type="project" value="UniProtKB-UniRule"/>
</dbReference>
<dbReference type="CDD" id="cd01658">
    <property type="entry name" value="Ribosomal_L30"/>
    <property type="match status" value="1"/>
</dbReference>
<dbReference type="Gene3D" id="3.30.1390.20">
    <property type="entry name" value="Ribosomal protein L30, ferredoxin-like fold domain"/>
    <property type="match status" value="1"/>
</dbReference>
<dbReference type="HAMAP" id="MF_01371_B">
    <property type="entry name" value="Ribosomal_uL30_B"/>
    <property type="match status" value="1"/>
</dbReference>
<dbReference type="InterPro" id="IPR036919">
    <property type="entry name" value="Ribo_uL30_ferredoxin-like_sf"/>
</dbReference>
<dbReference type="InterPro" id="IPR005996">
    <property type="entry name" value="Ribosomal_uL30_bac-type"/>
</dbReference>
<dbReference type="InterPro" id="IPR016082">
    <property type="entry name" value="Ribosomal_uL30_ferredoxin-like"/>
</dbReference>
<dbReference type="NCBIfam" id="TIGR01308">
    <property type="entry name" value="rpmD_bact"/>
    <property type="match status" value="1"/>
</dbReference>
<dbReference type="PANTHER" id="PTHR15892:SF2">
    <property type="entry name" value="LARGE RIBOSOMAL SUBUNIT PROTEIN UL30M"/>
    <property type="match status" value="1"/>
</dbReference>
<dbReference type="PANTHER" id="PTHR15892">
    <property type="entry name" value="MITOCHONDRIAL RIBOSOMAL PROTEIN L30"/>
    <property type="match status" value="1"/>
</dbReference>
<dbReference type="Pfam" id="PF00327">
    <property type="entry name" value="Ribosomal_L30"/>
    <property type="match status" value="1"/>
</dbReference>
<dbReference type="PIRSF" id="PIRSF002211">
    <property type="entry name" value="Ribosomal_L30_bac-type"/>
    <property type="match status" value="1"/>
</dbReference>
<dbReference type="SUPFAM" id="SSF55129">
    <property type="entry name" value="Ribosomal protein L30p/L7e"/>
    <property type="match status" value="1"/>
</dbReference>
<name>RL30_ROSDO</name>
<reference key="1">
    <citation type="journal article" date="2007" name="J. Bacteriol.">
        <title>The complete genome sequence of Roseobacter denitrificans reveals a mixotrophic rather than photosynthetic metabolism.</title>
        <authorList>
            <person name="Swingley W.D."/>
            <person name="Sadekar S."/>
            <person name="Mastrian S.D."/>
            <person name="Matthies H.J."/>
            <person name="Hao J."/>
            <person name="Ramos H."/>
            <person name="Acharya C.R."/>
            <person name="Conrad A.L."/>
            <person name="Taylor H.L."/>
            <person name="Dejesa L.C."/>
            <person name="Shah M.K."/>
            <person name="O'Huallachain M.E."/>
            <person name="Lince M.T."/>
            <person name="Blankenship R.E."/>
            <person name="Beatty J.T."/>
            <person name="Touchman J.W."/>
        </authorList>
    </citation>
    <scope>NUCLEOTIDE SEQUENCE [LARGE SCALE GENOMIC DNA]</scope>
    <source>
        <strain>ATCC 33942 / OCh 114</strain>
    </source>
</reference>
<keyword id="KW-1185">Reference proteome</keyword>
<keyword id="KW-0687">Ribonucleoprotein</keyword>
<keyword id="KW-0689">Ribosomal protein</keyword>
<protein>
    <recommendedName>
        <fullName evidence="1">Large ribosomal subunit protein uL30</fullName>
    </recommendedName>
    <alternativeName>
        <fullName evidence="2">50S ribosomal protein L30</fullName>
    </alternativeName>
</protein>
<proteinExistence type="inferred from homology"/>
<comment type="subunit">
    <text evidence="1">Part of the 50S ribosomal subunit.</text>
</comment>
<comment type="similarity">
    <text evidence="1">Belongs to the universal ribosomal protein uL30 family.</text>
</comment>
<gene>
    <name evidence="1" type="primary">rpmD</name>
    <name type="ordered locus">RD1_1429</name>
</gene>